<accession>Q7VJ36</accession>
<accession>Q93PJ2</accession>
<feature type="chain" id="PRO_0000223418" description="Urease accessory protein UreE">
    <location>
        <begin position="1"/>
        <end position="174"/>
    </location>
</feature>
<protein>
    <recommendedName>
        <fullName evidence="1">Urease accessory protein UreE</fullName>
    </recommendedName>
</protein>
<gene>
    <name evidence="1" type="primary">ureE</name>
    <name type="ordered locus">HH_0410</name>
</gene>
<evidence type="ECO:0000255" key="1">
    <source>
        <dbReference type="HAMAP-Rule" id="MF_00822"/>
    </source>
</evidence>
<evidence type="ECO:0000305" key="2"/>
<keyword id="KW-0143">Chaperone</keyword>
<keyword id="KW-0963">Cytoplasm</keyword>
<keyword id="KW-0533">Nickel</keyword>
<keyword id="KW-0996">Nickel insertion</keyword>
<keyword id="KW-1185">Reference proteome</keyword>
<sequence>MRVEHIIGNIKDIDATHLDIDEVQIAWYDTKKKIARLNSQNGQVIAMKLAQAPKYGLNNGDILFLDEHKIIIISILPTWVLCMKPTHWHTMARLCYEIGNLHIPLFYNKDTMKLQAPFEQPLQRILEKQSIAFEKKWCVLDSKDRINITYPIASEPKLIQSPHFSIKITQKGLN</sequence>
<proteinExistence type="inferred from homology"/>
<reference key="1">
    <citation type="journal article" date="2001" name="Infect. Immun.">
        <title>Cloning, expression, and catalytic activity of Helicobacter hepaticus urease.</title>
        <authorList>
            <person name="Beckwith C.S."/>
            <person name="McGee D.J."/>
            <person name="Mobley H.L.T."/>
            <person name="Riley L.K."/>
        </authorList>
    </citation>
    <scope>NUCLEOTIDE SEQUENCE [GENOMIC DNA]</scope>
    <source>
        <strain>MU94-1</strain>
    </source>
</reference>
<reference key="2">
    <citation type="journal article" date="2003" name="Proc. Natl. Acad. Sci. U.S.A.">
        <title>The complete genome sequence of the carcinogenic bacterium Helicobacter hepaticus.</title>
        <authorList>
            <person name="Suerbaum S."/>
            <person name="Josenhans C."/>
            <person name="Sterzenbach T."/>
            <person name="Drescher B."/>
            <person name="Brandt P."/>
            <person name="Bell M."/>
            <person name="Droege M."/>
            <person name="Fartmann B."/>
            <person name="Fischer H.-P."/>
            <person name="Ge Z."/>
            <person name="Hoerster A."/>
            <person name="Holland R."/>
            <person name="Klein K."/>
            <person name="Koenig J."/>
            <person name="Macko L."/>
            <person name="Mendz G.L."/>
            <person name="Nyakatura G."/>
            <person name="Schauer D.B."/>
            <person name="Shen Z."/>
            <person name="Weber J."/>
            <person name="Frosch M."/>
            <person name="Fox J.G."/>
        </authorList>
    </citation>
    <scope>NUCLEOTIDE SEQUENCE [LARGE SCALE GENOMIC DNA]</scope>
    <source>
        <strain>ATCC 51449 / 3B1</strain>
    </source>
</reference>
<organism>
    <name type="scientific">Helicobacter hepaticus (strain ATCC 51449 / 3B1)</name>
    <dbReference type="NCBI Taxonomy" id="235279"/>
    <lineage>
        <taxon>Bacteria</taxon>
        <taxon>Pseudomonadati</taxon>
        <taxon>Campylobacterota</taxon>
        <taxon>Epsilonproteobacteria</taxon>
        <taxon>Campylobacterales</taxon>
        <taxon>Helicobacteraceae</taxon>
        <taxon>Helicobacter</taxon>
    </lineage>
</organism>
<dbReference type="EMBL" id="AF332656">
    <property type="protein sequence ID" value="AAK69201.1"/>
    <property type="molecule type" value="Genomic_DNA"/>
</dbReference>
<dbReference type="EMBL" id="AE017125">
    <property type="protein sequence ID" value="AAP77007.1"/>
    <property type="status" value="ALT_INIT"/>
    <property type="molecule type" value="Genomic_DNA"/>
</dbReference>
<dbReference type="RefSeq" id="WP_011115252.1">
    <property type="nucleotide sequence ID" value="NC_004917.1"/>
</dbReference>
<dbReference type="SMR" id="Q7VJ36"/>
<dbReference type="STRING" id="235279.HH_0410"/>
<dbReference type="KEGG" id="hhe:HH_0410"/>
<dbReference type="eggNOG" id="COG2371">
    <property type="taxonomic scope" value="Bacteria"/>
</dbReference>
<dbReference type="HOGENOM" id="CLU_093757_3_0_7"/>
<dbReference type="OrthoDB" id="9810882at2"/>
<dbReference type="Proteomes" id="UP000002495">
    <property type="component" value="Chromosome"/>
</dbReference>
<dbReference type="GO" id="GO:0005737">
    <property type="term" value="C:cytoplasm"/>
    <property type="evidence" value="ECO:0007669"/>
    <property type="project" value="UniProtKB-SubCell"/>
</dbReference>
<dbReference type="GO" id="GO:0016151">
    <property type="term" value="F:nickel cation binding"/>
    <property type="evidence" value="ECO:0007669"/>
    <property type="project" value="UniProtKB-UniRule"/>
</dbReference>
<dbReference type="GO" id="GO:0051082">
    <property type="term" value="F:unfolded protein binding"/>
    <property type="evidence" value="ECO:0007669"/>
    <property type="project" value="UniProtKB-UniRule"/>
</dbReference>
<dbReference type="GO" id="GO:0006457">
    <property type="term" value="P:protein folding"/>
    <property type="evidence" value="ECO:0007669"/>
    <property type="project" value="InterPro"/>
</dbReference>
<dbReference type="GO" id="GO:0065003">
    <property type="term" value="P:protein-containing complex assembly"/>
    <property type="evidence" value="ECO:0007669"/>
    <property type="project" value="InterPro"/>
</dbReference>
<dbReference type="GO" id="GO:0019627">
    <property type="term" value="P:urea metabolic process"/>
    <property type="evidence" value="ECO:0007669"/>
    <property type="project" value="InterPro"/>
</dbReference>
<dbReference type="CDD" id="cd00571">
    <property type="entry name" value="UreE"/>
    <property type="match status" value="1"/>
</dbReference>
<dbReference type="Gene3D" id="2.60.260.20">
    <property type="entry name" value="Urease metallochaperone UreE, N-terminal domain"/>
    <property type="match status" value="1"/>
</dbReference>
<dbReference type="Gene3D" id="3.30.70.790">
    <property type="entry name" value="UreE, C-terminal domain"/>
    <property type="match status" value="1"/>
</dbReference>
<dbReference type="HAMAP" id="MF_00822">
    <property type="entry name" value="UreE"/>
    <property type="match status" value="1"/>
</dbReference>
<dbReference type="InterPro" id="IPR012406">
    <property type="entry name" value="UreE"/>
</dbReference>
<dbReference type="InterPro" id="IPR007864">
    <property type="entry name" value="UreE_C_dom"/>
</dbReference>
<dbReference type="InterPro" id="IPR004029">
    <property type="entry name" value="UreE_N"/>
</dbReference>
<dbReference type="InterPro" id="IPR036118">
    <property type="entry name" value="UreE_N_sf"/>
</dbReference>
<dbReference type="NCBIfam" id="NF009754">
    <property type="entry name" value="PRK13261.1-6"/>
    <property type="match status" value="1"/>
</dbReference>
<dbReference type="Pfam" id="PF05194">
    <property type="entry name" value="UreE_C"/>
    <property type="match status" value="1"/>
</dbReference>
<dbReference type="Pfam" id="PF02814">
    <property type="entry name" value="UreE_N"/>
    <property type="match status" value="1"/>
</dbReference>
<dbReference type="SMART" id="SM00988">
    <property type="entry name" value="UreE_N"/>
    <property type="match status" value="1"/>
</dbReference>
<dbReference type="SUPFAM" id="SSF69737">
    <property type="entry name" value="Urease metallochaperone UreE, C-terminal domain"/>
    <property type="match status" value="1"/>
</dbReference>
<dbReference type="SUPFAM" id="SSF69287">
    <property type="entry name" value="Urease metallochaperone UreE, N-terminal domain"/>
    <property type="match status" value="1"/>
</dbReference>
<name>UREE_HELHP</name>
<comment type="function">
    <text evidence="1">Involved in urease metallocenter assembly. Binds nickel. Probably functions as a nickel donor during metallocenter assembly.</text>
</comment>
<comment type="subcellular location">
    <subcellularLocation>
        <location evidence="1">Cytoplasm</location>
    </subcellularLocation>
</comment>
<comment type="similarity">
    <text evidence="1">Belongs to the UreE family.</text>
</comment>
<comment type="sequence caution" evidence="2">
    <conflict type="erroneous initiation">
        <sequence resource="EMBL-CDS" id="AAP77007"/>
    </conflict>
</comment>